<proteinExistence type="inferred from homology"/>
<accession>Q9UV71</accession>
<keyword id="KW-0249">Electron transport</keyword>
<keyword id="KW-0408">Iron</keyword>
<keyword id="KW-0472">Membrane</keyword>
<keyword id="KW-0479">Metal-binding</keyword>
<keyword id="KW-0496">Mitochondrion</keyword>
<keyword id="KW-0999">Mitochondrion inner membrane</keyword>
<keyword id="KW-0560">Oxidoreductase</keyword>
<keyword id="KW-0679">Respiratory chain</keyword>
<keyword id="KW-0809">Transit peptide</keyword>
<keyword id="KW-0812">Transmembrane</keyword>
<keyword id="KW-1133">Transmembrane helix</keyword>
<keyword id="KW-0813">Transport</keyword>
<organism>
    <name type="scientific">Candida albicans</name>
    <name type="common">Yeast</name>
    <dbReference type="NCBI Taxonomy" id="5476"/>
    <lineage>
        <taxon>Eukaryota</taxon>
        <taxon>Fungi</taxon>
        <taxon>Dikarya</taxon>
        <taxon>Ascomycota</taxon>
        <taxon>Saccharomycotina</taxon>
        <taxon>Pichiomycetes</taxon>
        <taxon>Debaryomycetaceae</taxon>
        <taxon>Candida/Lodderomyces clade</taxon>
        <taxon>Candida</taxon>
    </lineage>
</organism>
<sequence>MLTASLYKQLPVLTTTATSTYSFIRLSSTLATPPHSTTTTSPSSPAFHQPNHPQQFANPNTSVFDVSTRIYTQEGIDNNNDTKFLTKAPYPHPVFPQDECENVTVTHRETKTLGDKISFRSIQFMRQCFDLVTGYAVPKTNNPDEFKGTRWEMTEGKWLTRCIFLESVAGVPGSVAGFLRHLHSLRMLRRDKAWIETLLDEAYNERMHLLTFIKIGKPSWFTRSIIYVGQGVFTNVFFLLYLLNPRYCHRFVGYLEEEAVRTYSHLLDELAVPGKLPAFETMKIPEVAVQYWPELTPKSSFKDLILRIRADEAKHREVNHTFANLEQKTDRNPFALKIEGLNKPQPNHGINVMRPTGWEKQDLQL</sequence>
<dbReference type="EC" id="1.-.-.-"/>
<dbReference type="EMBL" id="AF116872">
    <property type="protein sequence ID" value="AAF21993.1"/>
    <property type="molecule type" value="Genomic_DNA"/>
</dbReference>
<dbReference type="SMR" id="Q9UV71"/>
<dbReference type="VEuPathDB" id="FungiDB:C1_09150W_A"/>
<dbReference type="VEuPathDB" id="FungiDB:CAWG_00514"/>
<dbReference type="GO" id="GO:0005743">
    <property type="term" value="C:mitochondrial inner membrane"/>
    <property type="evidence" value="ECO:0007669"/>
    <property type="project" value="UniProtKB-SubCell"/>
</dbReference>
<dbReference type="GO" id="GO:0009916">
    <property type="term" value="F:alternative oxidase activity"/>
    <property type="evidence" value="ECO:0007669"/>
    <property type="project" value="InterPro"/>
</dbReference>
<dbReference type="GO" id="GO:0046872">
    <property type="term" value="F:metal ion binding"/>
    <property type="evidence" value="ECO:0007669"/>
    <property type="project" value="UniProtKB-KW"/>
</dbReference>
<dbReference type="GO" id="GO:0010230">
    <property type="term" value="P:alternative respiration"/>
    <property type="evidence" value="ECO:0007669"/>
    <property type="project" value="TreeGrafter"/>
</dbReference>
<dbReference type="CDD" id="cd01053">
    <property type="entry name" value="AOX"/>
    <property type="match status" value="1"/>
</dbReference>
<dbReference type="FunFam" id="1.20.1260.140:FF:000002">
    <property type="entry name" value="Alternative oxidase"/>
    <property type="match status" value="1"/>
</dbReference>
<dbReference type="Gene3D" id="1.20.1260.140">
    <property type="entry name" value="Alternative oxidase"/>
    <property type="match status" value="1"/>
</dbReference>
<dbReference type="InterPro" id="IPR002680">
    <property type="entry name" value="AOX"/>
</dbReference>
<dbReference type="InterPro" id="IPR038659">
    <property type="entry name" value="AOX_sf"/>
</dbReference>
<dbReference type="PANTHER" id="PTHR31803">
    <property type="entry name" value="ALTERNATIVE OXIDASE"/>
    <property type="match status" value="1"/>
</dbReference>
<dbReference type="PANTHER" id="PTHR31803:SF3">
    <property type="entry name" value="ALTERNATIVE OXIDASE"/>
    <property type="match status" value="1"/>
</dbReference>
<dbReference type="Pfam" id="PF01786">
    <property type="entry name" value="AOX"/>
    <property type="match status" value="1"/>
</dbReference>
<dbReference type="PIRSF" id="PIRSF005229">
    <property type="entry name" value="AOX"/>
    <property type="match status" value="1"/>
</dbReference>
<gene>
    <name type="primary">AOX2</name>
    <name type="synonym">AOX1B</name>
</gene>
<comment type="function">
    <text evidence="1">Catalyzes cyanide-resistant oxygen consumption. May increase respiration when the cytochrome respiratory pathway is restricted, or in response to low temperatures (By similarity).</text>
</comment>
<comment type="cofactor">
    <cofactor evidence="2">
        <name>Fe cation</name>
        <dbReference type="ChEBI" id="CHEBI:24875"/>
    </cofactor>
    <text evidence="2">Binds 2 iron ions per subunit.</text>
</comment>
<comment type="subcellular location">
    <subcellularLocation>
        <location evidence="1">Mitochondrion inner membrane</location>
        <topology evidence="1">Single-pass membrane protein</topology>
        <orientation evidence="1">Matrix side</orientation>
    </subcellularLocation>
    <text evidence="1">Possibly in the inner surface of the inner mitochondrial membrane.</text>
</comment>
<comment type="similarity">
    <text evidence="5">Belongs to the alternative oxidase family.</text>
</comment>
<reference key="1">
    <citation type="journal article" date="2001" name="Biochem. J.">
        <title>Characterization of the gene family encoding alternative oxidase from Candida albicans.</title>
        <authorList>
            <person name="Huh W.-K."/>
            <person name="Kang S.-O."/>
        </authorList>
    </citation>
    <scope>NUCLEOTIDE SEQUENCE [GENOMIC DNA]</scope>
    <source>
        <strain>ATCC 10231 / CBS 6431 / CIP 48.72 / DSM 1386 / NBRC 1594</strain>
    </source>
</reference>
<name>AOX2_CANAX</name>
<feature type="transit peptide" description="Mitochondrion" evidence="3">
    <location>
        <begin position="1"/>
        <end status="unknown"/>
    </location>
</feature>
<feature type="chain" id="PRO_0000001718" description="Alternative oxidase 2, mitochondrial">
    <location>
        <begin status="unknown"/>
        <end position="365"/>
    </location>
</feature>
<feature type="transmembrane region" description="Helical" evidence="3">
    <location>
        <begin position="220"/>
        <end position="242"/>
    </location>
</feature>
<feature type="region of interest" description="Disordered" evidence="4">
    <location>
        <begin position="32"/>
        <end position="52"/>
    </location>
</feature>
<feature type="region of interest" description="Disordered" evidence="4">
    <location>
        <begin position="345"/>
        <end position="365"/>
    </location>
</feature>
<feature type="compositionally biased region" description="Low complexity" evidence="4">
    <location>
        <begin position="32"/>
        <end position="46"/>
    </location>
</feature>
<feature type="binding site" evidence="2">
    <location>
        <position position="166"/>
    </location>
    <ligand>
        <name>Fe cation</name>
        <dbReference type="ChEBI" id="CHEBI:24875"/>
        <label>1</label>
    </ligand>
</feature>
<feature type="binding site" evidence="3">
    <location>
        <position position="166"/>
    </location>
    <ligand>
        <name>Fe cation</name>
        <dbReference type="ChEBI" id="CHEBI:24875"/>
    </ligand>
</feature>
<feature type="binding site" evidence="2">
    <location>
        <position position="205"/>
    </location>
    <ligand>
        <name>Fe cation</name>
        <dbReference type="ChEBI" id="CHEBI:24875"/>
        <label>1</label>
    </ligand>
</feature>
<feature type="binding site" evidence="2">
    <location>
        <position position="205"/>
    </location>
    <ligand>
        <name>Fe cation</name>
        <dbReference type="ChEBI" id="CHEBI:24875"/>
        <label>2</label>
    </ligand>
</feature>
<feature type="binding site" evidence="3">
    <location>
        <position position="205"/>
    </location>
    <ligand>
        <name>Fe cation</name>
        <dbReference type="ChEBI" id="CHEBI:24875"/>
    </ligand>
</feature>
<feature type="binding site" evidence="2">
    <location>
        <position position="208"/>
    </location>
    <ligand>
        <name>Fe cation</name>
        <dbReference type="ChEBI" id="CHEBI:24875"/>
        <label>1</label>
    </ligand>
</feature>
<feature type="binding site" evidence="3">
    <location>
        <position position="208"/>
    </location>
    <ligand>
        <name>Fe cation</name>
        <dbReference type="ChEBI" id="CHEBI:24875"/>
    </ligand>
</feature>
<feature type="binding site" evidence="2">
    <location>
        <position position="256"/>
    </location>
    <ligand>
        <name>Fe cation</name>
        <dbReference type="ChEBI" id="CHEBI:24875"/>
        <label>2</label>
    </ligand>
</feature>
<feature type="binding site" evidence="3">
    <location>
        <position position="257"/>
    </location>
    <ligand>
        <name>Fe cation</name>
        <dbReference type="ChEBI" id="CHEBI:24875"/>
    </ligand>
</feature>
<feature type="binding site" evidence="2">
    <location>
        <position position="312"/>
    </location>
    <ligand>
        <name>Fe cation</name>
        <dbReference type="ChEBI" id="CHEBI:24875"/>
        <label>1</label>
    </ligand>
</feature>
<feature type="binding site" evidence="2">
    <location>
        <position position="312"/>
    </location>
    <ligand>
        <name>Fe cation</name>
        <dbReference type="ChEBI" id="CHEBI:24875"/>
        <label>2</label>
    </ligand>
</feature>
<feature type="binding site" evidence="3">
    <location>
        <position position="312"/>
    </location>
    <ligand>
        <name>Fe cation</name>
        <dbReference type="ChEBI" id="CHEBI:24875"/>
    </ligand>
</feature>
<feature type="binding site" evidence="2">
    <location>
        <position position="315"/>
    </location>
    <ligand>
        <name>Fe cation</name>
        <dbReference type="ChEBI" id="CHEBI:24875"/>
        <label>2</label>
    </ligand>
</feature>
<feature type="binding site" evidence="3">
    <location>
        <position position="315"/>
    </location>
    <ligand>
        <name>Fe cation</name>
        <dbReference type="ChEBI" id="CHEBI:24875"/>
    </ligand>
</feature>
<protein>
    <recommendedName>
        <fullName>Alternative oxidase 2, mitochondrial</fullName>
        <ecNumber>1.-.-.-</ecNumber>
    </recommendedName>
</protein>
<evidence type="ECO:0000250" key="1"/>
<evidence type="ECO:0000250" key="2">
    <source>
        <dbReference type="UniProtKB" id="Q26710"/>
    </source>
</evidence>
<evidence type="ECO:0000255" key="3"/>
<evidence type="ECO:0000256" key="4">
    <source>
        <dbReference type="SAM" id="MobiDB-lite"/>
    </source>
</evidence>
<evidence type="ECO:0000305" key="5"/>